<dbReference type="PDB" id="1RMR">
    <property type="method" value="X-ray"/>
    <property type="resolution" value="2.50 A"/>
    <property type="chains" value="A=1-64"/>
</dbReference>
<dbReference type="PDBsum" id="1RMR"/>
<dbReference type="SMR" id="P83658"/>
<dbReference type="EvolutionaryTrace" id="P83658"/>
<dbReference type="GO" id="GO:0005576">
    <property type="term" value="C:extracellular region"/>
    <property type="evidence" value="ECO:0007669"/>
    <property type="project" value="UniProtKB-SubCell"/>
</dbReference>
<dbReference type="GO" id="GO:0090729">
    <property type="term" value="F:toxin activity"/>
    <property type="evidence" value="ECO:0007669"/>
    <property type="project" value="UniProtKB-KW"/>
</dbReference>
<dbReference type="Gene3D" id="4.10.70.10">
    <property type="entry name" value="Disintegrin domain"/>
    <property type="match status" value="1"/>
</dbReference>
<dbReference type="InterPro" id="IPR018358">
    <property type="entry name" value="Disintegrin_CS"/>
</dbReference>
<dbReference type="InterPro" id="IPR001762">
    <property type="entry name" value="Disintegrin_dom"/>
</dbReference>
<dbReference type="InterPro" id="IPR036436">
    <property type="entry name" value="Disintegrin_dom_sf"/>
</dbReference>
<dbReference type="Pfam" id="PF00200">
    <property type="entry name" value="Disintegrin"/>
    <property type="match status" value="1"/>
</dbReference>
<dbReference type="PRINTS" id="PR00289">
    <property type="entry name" value="DISINTEGRIN"/>
</dbReference>
<dbReference type="SMART" id="SM00050">
    <property type="entry name" value="DISIN"/>
    <property type="match status" value="1"/>
</dbReference>
<dbReference type="SUPFAM" id="SSF57552">
    <property type="entry name" value="Blood coagulation inhibitor (disintegrin)"/>
    <property type="match status" value="1"/>
</dbReference>
<dbReference type="PROSITE" id="PS00427">
    <property type="entry name" value="DISINTEGRIN_1"/>
    <property type="match status" value="1"/>
</dbReference>
<dbReference type="PROSITE" id="PS50214">
    <property type="entry name" value="DISINTEGRIN_2"/>
    <property type="match status" value="1"/>
</dbReference>
<accession>P83658</accession>
<evidence type="ECO:0000255" key="1">
    <source>
        <dbReference type="PROSITE-ProRule" id="PRU00068"/>
    </source>
</evidence>
<evidence type="ECO:0000269" key="2">
    <source>
    </source>
</evidence>
<evidence type="ECO:0000269" key="3">
    <source>
    </source>
</evidence>
<evidence type="ECO:0000269" key="4">
    <source ref="1"/>
</evidence>
<evidence type="ECO:0000305" key="5"/>
<evidence type="ECO:0007829" key="6">
    <source>
        <dbReference type="PDB" id="1RMR"/>
    </source>
</evidence>
<organism evidence="5">
    <name type="scientific">Echis carinatus</name>
    <name type="common">Saw-scaled viper</name>
    <dbReference type="NCBI Taxonomy" id="40353"/>
    <lineage>
        <taxon>Eukaryota</taxon>
        <taxon>Metazoa</taxon>
        <taxon>Chordata</taxon>
        <taxon>Craniata</taxon>
        <taxon>Vertebrata</taxon>
        <taxon>Euteleostomi</taxon>
        <taxon>Lepidosauria</taxon>
        <taxon>Squamata</taxon>
        <taxon>Bifurcata</taxon>
        <taxon>Unidentata</taxon>
        <taxon>Episquamata</taxon>
        <taxon>Toxicofera</taxon>
        <taxon>Serpentes</taxon>
        <taxon>Colubroidea</taxon>
        <taxon>Viperidae</taxon>
        <taxon>Viperinae</taxon>
        <taxon>Echis</taxon>
    </lineage>
</organism>
<reference evidence="5" key="1">
    <citation type="submission" date="2003-09" db="UniProtKB">
        <authorList>
            <person name="Bilgrami S."/>
            <person name="Jabeen T."/>
            <person name="Kumar J."/>
            <person name="Yadav S."/>
            <person name="Sharma S."/>
            <person name="Kaur P."/>
            <person name="Singh T.P."/>
        </authorList>
    </citation>
    <scope>PROTEIN SEQUENCE</scope>
    <scope>SUBUNIT</scope>
    <scope>SUBCELLULAR LOCATION</scope>
    <scope>TISSUE SPECIFICITY</scope>
    <scope>DISULFIDE BONDS</scope>
    <source>
        <tissue evidence="5">Venom</tissue>
    </source>
</reference>
<reference evidence="5" key="2">
    <citation type="journal article" date="2001" name="Acta Crystallogr. D">
        <title>Purification, crystallization and preliminary X-ray diffraction studies of disintegrin (schistatin) from saw-scaled viper (Echis carinatus).</title>
        <authorList>
            <person name="Tomar S."/>
            <person name="Yadav S."/>
            <person name="Chandra V."/>
            <person name="Kumar P."/>
            <person name="Singh T.P."/>
        </authorList>
    </citation>
    <scope>PROTEIN SEQUENCE OF 1-19</scope>
    <scope>X-RAY CRYSTALLOGRAPHY (2.5 ANGSTROMS)</scope>
    <source>
        <tissue evidence="2">Venom</tissue>
    </source>
</reference>
<reference key="3">
    <citation type="journal article" date="2004" name="J. Mol. Biol.">
        <title>Crystal structure of schistatin, a disintegrin homodimer from saw-scaled viper (Echis carinatus) at 2.5 A resolution.</title>
        <authorList>
            <person name="Bilgrami S."/>
            <person name="Tomar S."/>
            <person name="Yadav S."/>
            <person name="Kaur P."/>
            <person name="Kumar J."/>
            <person name="Jabeen T."/>
            <person name="Sharma S."/>
            <person name="Singh T.P."/>
        </authorList>
    </citation>
    <scope>X-RAY CRYSTALLOGRAPHY (2.5 ANGSTROMS)</scope>
    <scope>DISULFIDE BONDS</scope>
</reference>
<proteinExistence type="evidence at protein level"/>
<name>DIDS_ECHCA</name>
<sequence>NSVHPCCDPVICEPREGEHCISGPCCENCYFLNSGTICKRARGDGNQDYCTGITPDCPRNRYNV</sequence>
<feature type="chain" id="PRO_0000101800" description="Disintegrin schistatin">
    <location>
        <begin position="1"/>
        <end position="64"/>
    </location>
</feature>
<feature type="domain" description="Disintegrin" evidence="1">
    <location>
        <begin position="1"/>
        <end position="64"/>
    </location>
</feature>
<feature type="short sequence motif" description="Cell attachment site">
    <location>
        <begin position="42"/>
        <end position="44"/>
    </location>
</feature>
<feature type="disulfide bond" evidence="5">
    <location>
        <begin position="6"/>
        <end position="29"/>
    </location>
</feature>
<feature type="disulfide bond" description="Interchain (with C-12)">
    <location>
        <position position="7"/>
    </location>
</feature>
<feature type="disulfide bond" description="Interchain (with C-7)">
    <location>
        <position position="12"/>
    </location>
</feature>
<feature type="disulfide bond" evidence="5">
    <location>
        <begin position="20"/>
        <end position="26"/>
    </location>
</feature>
<feature type="disulfide bond" evidence="5">
    <location>
        <begin position="25"/>
        <end position="50"/>
    </location>
</feature>
<feature type="disulfide bond" evidence="5">
    <location>
        <begin position="38"/>
        <end position="57"/>
    </location>
</feature>
<feature type="sequence conflict" description="In Ref. 2; AA sequence." evidence="5" ref="2">
    <original>D</original>
    <variation>P</variation>
    <location>
        <position position="8"/>
    </location>
</feature>
<feature type="turn" evidence="6">
    <location>
        <begin position="9"/>
        <end position="11"/>
    </location>
</feature>
<feature type="strand" evidence="6">
    <location>
        <begin position="12"/>
        <end position="14"/>
    </location>
</feature>
<feature type="strand" evidence="6">
    <location>
        <begin position="37"/>
        <end position="39"/>
    </location>
</feature>
<feature type="strand" evidence="6">
    <location>
        <begin position="42"/>
        <end position="45"/>
    </location>
</feature>
<comment type="function">
    <text>May bind to both alpha-IIb/beta-3 (ITGA2B/ITGB3) and alpha-V/beta-3 (ITGAV/ITGB3) integrins, and may inhibit platelet aggregation.</text>
</comment>
<comment type="subunit">
    <text evidence="3 4">Homodimer; disulfide-linked.</text>
</comment>
<comment type="subcellular location">
    <subcellularLocation>
        <location evidence="4 5">Secreted</location>
    </subcellularLocation>
</comment>
<comment type="tissue specificity">
    <text evidence="4 5">Expressed by the venom gland.</text>
</comment>
<comment type="similarity">
    <text evidence="5">Belongs to the disintegrin family. Dimeric disintegrin subfamily.</text>
</comment>
<protein>
    <recommendedName>
        <fullName>Disintegrin schistatin</fullName>
    </recommendedName>
</protein>
<keyword id="KW-0002">3D-structure</keyword>
<keyword id="KW-1217">Cell adhesion impairing toxin</keyword>
<keyword id="KW-0903">Direct protein sequencing</keyword>
<keyword id="KW-1015">Disulfide bond</keyword>
<keyword id="KW-1199">Hemostasis impairing toxin</keyword>
<keyword id="KW-1201">Platelet aggregation inhibiting toxin</keyword>
<keyword id="KW-0964">Secreted</keyword>
<keyword id="KW-0800">Toxin</keyword>